<organism>
    <name type="scientific">Olivierus martensii</name>
    <name type="common">Manchurian scorpion</name>
    <name type="synonym">Mesobuthus martensii</name>
    <dbReference type="NCBI Taxonomy" id="34649"/>
    <lineage>
        <taxon>Eukaryota</taxon>
        <taxon>Metazoa</taxon>
        <taxon>Ecdysozoa</taxon>
        <taxon>Arthropoda</taxon>
        <taxon>Chelicerata</taxon>
        <taxon>Arachnida</taxon>
        <taxon>Scorpiones</taxon>
        <taxon>Buthida</taxon>
        <taxon>Buthoidea</taxon>
        <taxon>Buthidae</taxon>
        <taxon>Olivierus</taxon>
    </lineage>
</organism>
<name>CBP_OLIMR</name>
<reference key="1">
    <citation type="journal article" date="2008" name="Toxicon">
        <title>Purification and N-terminal sequence of a serine proteinase-like protein (BMK-CBP) from the venom of the Chinese scorpion (Buthus martensii Karsch).</title>
        <authorList>
            <person name="Gao R."/>
            <person name="Zhang Y."/>
            <person name="Gopalakrishnakone P."/>
        </authorList>
    </citation>
    <scope>PROTEIN SEQUENCE</scope>
    <scope>FUNCTION</scope>
    <scope>SUBCELLULAR LOCATION</scope>
    <source>
        <tissue>Venom</tissue>
    </source>
</reference>
<proteinExistence type="evidence at protein level"/>
<protein>
    <recommendedName>
        <fullName evidence="5">Serine proteinase-like BMK-CBP</fullName>
    </recommendedName>
</protein>
<feature type="chain" id="PRO_0000359444" description="Serine proteinase-like BMK-CBP">
    <location>
        <begin position="1"/>
        <end position="40" status="greater than"/>
    </location>
</feature>
<feature type="domain" description="Peptidase S1" evidence="1">
    <location>
        <begin position="1"/>
        <end position="40" status="greater than"/>
    </location>
</feature>
<feature type="active site" description="Charge relay system" evidence="1 2 3">
    <location>
        <position position="40"/>
    </location>
</feature>
<feature type="non-terminal residue">
    <location>
        <position position="40"/>
    </location>
</feature>
<keyword id="KW-0903">Direct protein sequencing</keyword>
<keyword id="KW-0964">Secreted</keyword>
<sequence>IFGGTFAKNGEYPWMVVIDLPEFACGGVLISKKFVLTAAH</sequence>
<dbReference type="SMR" id="P0C8M2"/>
<dbReference type="GO" id="GO:0005576">
    <property type="term" value="C:extracellular region"/>
    <property type="evidence" value="ECO:0000314"/>
    <property type="project" value="UniProtKB"/>
</dbReference>
<dbReference type="GO" id="GO:0004252">
    <property type="term" value="F:serine-type endopeptidase activity"/>
    <property type="evidence" value="ECO:0007669"/>
    <property type="project" value="InterPro"/>
</dbReference>
<dbReference type="GO" id="GO:0005102">
    <property type="term" value="F:signaling receptor binding"/>
    <property type="evidence" value="ECO:0000314"/>
    <property type="project" value="UniProtKB"/>
</dbReference>
<dbReference type="GO" id="GO:0006508">
    <property type="term" value="P:proteolysis"/>
    <property type="evidence" value="ECO:0007669"/>
    <property type="project" value="InterPro"/>
</dbReference>
<dbReference type="Gene3D" id="2.40.10.10">
    <property type="entry name" value="Trypsin-like serine proteases"/>
    <property type="match status" value="1"/>
</dbReference>
<dbReference type="InterPro" id="IPR009003">
    <property type="entry name" value="Peptidase_S1_PA"/>
</dbReference>
<dbReference type="InterPro" id="IPR043504">
    <property type="entry name" value="Peptidase_S1_PA_chymotrypsin"/>
</dbReference>
<dbReference type="InterPro" id="IPR001254">
    <property type="entry name" value="Trypsin_dom"/>
</dbReference>
<dbReference type="Pfam" id="PF00089">
    <property type="entry name" value="Trypsin"/>
    <property type="match status" value="1"/>
</dbReference>
<dbReference type="SUPFAM" id="SSF50494">
    <property type="entry name" value="Trypsin-like serine proteases"/>
    <property type="match status" value="1"/>
</dbReference>
<evidence type="ECO:0000255" key="1">
    <source>
        <dbReference type="PROSITE-ProRule" id="PRU00274"/>
    </source>
</evidence>
<evidence type="ECO:0000255" key="2">
    <source>
        <dbReference type="PROSITE-ProRule" id="PRU10078"/>
    </source>
</evidence>
<evidence type="ECO:0000255" key="3">
    <source>
        <dbReference type="PROSITE-ProRule" id="PRU10079"/>
    </source>
</evidence>
<evidence type="ECO:0000269" key="4">
    <source>
    </source>
</evidence>
<evidence type="ECO:0000303" key="5">
    <source>
    </source>
</evidence>
<evidence type="ECO:0000305" key="6">
    <source>
    </source>
</evidence>
<accession>P0C8M2</accession>
<comment type="function">
    <text evidence="4">Binds in a dose-dependent manner to the breast cancer cell line MCF-7.</text>
</comment>
<comment type="subcellular location">
    <subcellularLocation>
        <location evidence="4">Secreted</location>
    </subcellularLocation>
</comment>
<comment type="tissue specificity">
    <text evidence="6">Expressed by the venom gland.</text>
</comment>
<comment type="miscellaneous">
    <text evidence="4">The molecular weight determined on 2D-gel is 33 kDa.</text>
</comment>
<comment type="miscellaneous">
    <text evidence="4">Negative results: Shows no significant hydrolytic activity.</text>
</comment>
<comment type="similarity">
    <text evidence="1">Belongs to the peptidase S1 family.</text>
</comment>